<proteinExistence type="evidence at transcript level"/>
<organism>
    <name type="scientific">Arabidopsis thaliana</name>
    <name type="common">Mouse-ear cress</name>
    <dbReference type="NCBI Taxonomy" id="3702"/>
    <lineage>
        <taxon>Eukaryota</taxon>
        <taxon>Viridiplantae</taxon>
        <taxon>Streptophyta</taxon>
        <taxon>Embryophyta</taxon>
        <taxon>Tracheophyta</taxon>
        <taxon>Spermatophyta</taxon>
        <taxon>Magnoliopsida</taxon>
        <taxon>eudicotyledons</taxon>
        <taxon>Gunneridae</taxon>
        <taxon>Pentapetalae</taxon>
        <taxon>rosids</taxon>
        <taxon>malvids</taxon>
        <taxon>Brassicales</taxon>
        <taxon>Brassicaceae</taxon>
        <taxon>Camelineae</taxon>
        <taxon>Arabidopsis</taxon>
    </lineage>
</organism>
<keyword id="KW-0227">DNA damage</keyword>
<keyword id="KW-0234">DNA repair</keyword>
<keyword id="KW-0378">Hydrolase</keyword>
<keyword id="KW-0539">Nucleus</keyword>
<keyword id="KW-1185">Reference proteome</keyword>
<comment type="function">
    <text evidence="1">Hydrolysis of the deoxyribose N-glycosidic bond to excise 3-methyladenine, and 7-methylguanine from the damaged DNA polymer formed by alkylation lesions.</text>
</comment>
<comment type="catalytic activity">
    <reaction>
        <text>Hydrolysis of alkylated DNA, releasing 3-methyladenine, 3-methylguanine, 7-methylguanine and 7-methyladenine.</text>
        <dbReference type="EC" id="3.2.2.21"/>
    </reaction>
</comment>
<comment type="subcellular location">
    <subcellularLocation>
        <location evidence="3">Nucleus</location>
    </subcellularLocation>
</comment>
<comment type="similarity">
    <text evidence="3">Belongs to the DNA glycosylase MPG family.</text>
</comment>
<protein>
    <recommendedName>
        <fullName>DNA-3-methyladenine glycosylase</fullName>
        <ecNumber>3.2.2.21</ecNumber>
    </recommendedName>
    <alternativeName>
        <fullName>3-methyladenine DNA glycosidase</fullName>
    </alternativeName>
</protein>
<sequence>MKTPARRSKRVNQEESETNVTTRVVLRTRKTNCSKTRAARVRPDYPLTRTTSESEMKLMPPEFFQIDALDLAPRLLGKFMRRDNVVLRITEVEAYRPNDSACHGRFGVTPRTAPVFGPGGHAYVYLCYGLHMMLNIVADKEGVGAAVLIRSCSPVSGMETIQERRGLKTDKPVLLNGPGKVGQALGLSTEWSHHPLYSPGGLELLDGGEDVEKVMVGPRVGIDYALPEHVNALWRFAVADTPWISAPKNTLKPL</sequence>
<feature type="chain" id="PRO_0000100068" description="DNA-3-methyladenine glycosylase">
    <location>
        <begin position="1"/>
        <end position="254"/>
    </location>
</feature>
<feature type="region of interest" description="Disordered" evidence="2">
    <location>
        <begin position="1"/>
        <end position="20"/>
    </location>
</feature>
<feature type="compositionally biased region" description="Basic residues" evidence="2">
    <location>
        <begin position="1"/>
        <end position="10"/>
    </location>
</feature>
<gene>
    <name type="primary">MAG</name>
    <name type="ordered locus">At3g12040</name>
    <name type="ORF">MEC18.17</name>
    <name type="ORF">T21B14.14</name>
    <name type="ORF">T21B14_115</name>
</gene>
<dbReference type="EC" id="3.2.2.21"/>
<dbReference type="EMBL" id="X76169">
    <property type="protein sequence ID" value="CAA53763.1"/>
    <property type="molecule type" value="mRNA"/>
</dbReference>
<dbReference type="EMBL" id="AP002040">
    <property type="protein sequence ID" value="BAB03116.1"/>
    <property type="molecule type" value="Genomic_DNA"/>
</dbReference>
<dbReference type="EMBL" id="AC069473">
    <property type="protein sequence ID" value="AAG51039.1"/>
    <property type="molecule type" value="Genomic_DNA"/>
</dbReference>
<dbReference type="EMBL" id="CP002686">
    <property type="protein sequence ID" value="AEE75140.1"/>
    <property type="molecule type" value="Genomic_DNA"/>
</dbReference>
<dbReference type="RefSeq" id="NP_187811.1">
    <property type="nucleotide sequence ID" value="NM_112038.3"/>
</dbReference>
<dbReference type="SMR" id="Q39147"/>
<dbReference type="FunCoup" id="Q39147">
    <property type="interactions" value="587"/>
</dbReference>
<dbReference type="STRING" id="3702.Q39147"/>
<dbReference type="GlyGen" id="Q39147">
    <property type="glycosylation" value="1 site"/>
</dbReference>
<dbReference type="PaxDb" id="3702-AT3G12040.1"/>
<dbReference type="ProteomicsDB" id="245104"/>
<dbReference type="DNASU" id="820378"/>
<dbReference type="EnsemblPlants" id="AT3G12040.1">
    <property type="protein sequence ID" value="AT3G12040.1"/>
    <property type="gene ID" value="AT3G12040"/>
</dbReference>
<dbReference type="GeneID" id="820378"/>
<dbReference type="Gramene" id="AT3G12040.1">
    <property type="protein sequence ID" value="AT3G12040.1"/>
    <property type="gene ID" value="AT3G12040"/>
</dbReference>
<dbReference type="KEGG" id="ath:AT3G12040"/>
<dbReference type="Araport" id="AT3G12040"/>
<dbReference type="TAIR" id="AT3G12040"/>
<dbReference type="eggNOG" id="KOG4486">
    <property type="taxonomic scope" value="Eukaryota"/>
</dbReference>
<dbReference type="HOGENOM" id="CLU_060471_1_0_1"/>
<dbReference type="InParanoid" id="Q39147"/>
<dbReference type="OMA" id="VEAYHHT"/>
<dbReference type="OrthoDB" id="6353017at2759"/>
<dbReference type="PhylomeDB" id="Q39147"/>
<dbReference type="PRO" id="PR:Q39147"/>
<dbReference type="Proteomes" id="UP000006548">
    <property type="component" value="Chromosome 3"/>
</dbReference>
<dbReference type="ExpressionAtlas" id="Q39147">
    <property type="expression patterns" value="baseline and differential"/>
</dbReference>
<dbReference type="GO" id="GO:0005634">
    <property type="term" value="C:nucleus"/>
    <property type="evidence" value="ECO:0007669"/>
    <property type="project" value="UniProtKB-SubCell"/>
</dbReference>
<dbReference type="GO" id="GO:0003905">
    <property type="term" value="F:alkylbase DNA N-glycosylase activity"/>
    <property type="evidence" value="ECO:0007669"/>
    <property type="project" value="UniProtKB-EC"/>
</dbReference>
<dbReference type="GO" id="GO:0003677">
    <property type="term" value="F:DNA binding"/>
    <property type="evidence" value="ECO:0007669"/>
    <property type="project" value="InterPro"/>
</dbReference>
<dbReference type="GO" id="GO:0006284">
    <property type="term" value="P:base-excision repair"/>
    <property type="evidence" value="ECO:0007669"/>
    <property type="project" value="InterPro"/>
</dbReference>
<dbReference type="CDD" id="cd00540">
    <property type="entry name" value="AAG"/>
    <property type="match status" value="1"/>
</dbReference>
<dbReference type="FunFam" id="3.10.300.10:FF:000001">
    <property type="entry name" value="Putative 3-methyladenine DNA glycosylase"/>
    <property type="match status" value="1"/>
</dbReference>
<dbReference type="Gene3D" id="3.10.300.10">
    <property type="entry name" value="Methylpurine-DNA glycosylase (MPG)"/>
    <property type="match status" value="1"/>
</dbReference>
<dbReference type="HAMAP" id="MF_00527">
    <property type="entry name" value="3MGH"/>
    <property type="match status" value="1"/>
</dbReference>
<dbReference type="InterPro" id="IPR011034">
    <property type="entry name" value="Formyl_transferase-like_C_sf"/>
</dbReference>
<dbReference type="InterPro" id="IPR003180">
    <property type="entry name" value="MPG"/>
</dbReference>
<dbReference type="InterPro" id="IPR036995">
    <property type="entry name" value="MPG_sf"/>
</dbReference>
<dbReference type="NCBIfam" id="TIGR00567">
    <property type="entry name" value="3mg"/>
    <property type="match status" value="1"/>
</dbReference>
<dbReference type="PANTHER" id="PTHR10429">
    <property type="entry name" value="DNA-3-METHYLADENINE GLYCOSYLASE"/>
    <property type="match status" value="1"/>
</dbReference>
<dbReference type="PANTHER" id="PTHR10429:SF0">
    <property type="entry name" value="DNA-3-METHYLADENINE GLYCOSYLASE"/>
    <property type="match status" value="1"/>
</dbReference>
<dbReference type="Pfam" id="PF02245">
    <property type="entry name" value="Pur_DNA_glyco"/>
    <property type="match status" value="1"/>
</dbReference>
<dbReference type="SUPFAM" id="SSF50486">
    <property type="entry name" value="FMT C-terminal domain-like"/>
    <property type="match status" value="1"/>
</dbReference>
<evidence type="ECO:0000250" key="1"/>
<evidence type="ECO:0000256" key="2">
    <source>
        <dbReference type="SAM" id="MobiDB-lite"/>
    </source>
</evidence>
<evidence type="ECO:0000305" key="3"/>
<reference key="1">
    <citation type="journal article" date="1994" name="Proc. Natl. Acad. Sci. U.S.A.">
        <title>Cloning of a 3-methyladenine-DNA glycosylase from Arabidopsis thaliana.</title>
        <authorList>
            <person name="Santerre A."/>
            <person name="Britt A.B."/>
        </authorList>
    </citation>
    <scope>NUCLEOTIDE SEQUENCE [MRNA]</scope>
    <source>
        <strain>cv. Columbia</strain>
        <tissue>Aerial part</tissue>
    </source>
</reference>
<reference key="2">
    <citation type="journal article" date="2000" name="DNA Res.">
        <title>Structural analysis of Arabidopsis thaliana chromosome 3. II. Sequence features of the 4,251,695 bp regions covered by 90 P1, TAC and BAC clones.</title>
        <authorList>
            <person name="Kaneko T."/>
            <person name="Katoh T."/>
            <person name="Sato S."/>
            <person name="Nakamura Y."/>
            <person name="Asamizu E."/>
            <person name="Tabata S."/>
        </authorList>
    </citation>
    <scope>NUCLEOTIDE SEQUENCE [LARGE SCALE GENOMIC DNA]</scope>
    <source>
        <strain>cv. Columbia</strain>
    </source>
</reference>
<reference key="3">
    <citation type="journal article" date="2000" name="Nature">
        <title>Sequence and analysis of chromosome 3 of the plant Arabidopsis thaliana.</title>
        <authorList>
            <person name="Salanoubat M."/>
            <person name="Lemcke K."/>
            <person name="Rieger M."/>
            <person name="Ansorge W."/>
            <person name="Unseld M."/>
            <person name="Fartmann B."/>
            <person name="Valle G."/>
            <person name="Bloecker H."/>
            <person name="Perez-Alonso M."/>
            <person name="Obermaier B."/>
            <person name="Delseny M."/>
            <person name="Boutry M."/>
            <person name="Grivell L.A."/>
            <person name="Mache R."/>
            <person name="Puigdomenech P."/>
            <person name="De Simone V."/>
            <person name="Choisne N."/>
            <person name="Artiguenave F."/>
            <person name="Robert C."/>
            <person name="Brottier P."/>
            <person name="Wincker P."/>
            <person name="Cattolico L."/>
            <person name="Weissenbach J."/>
            <person name="Saurin W."/>
            <person name="Quetier F."/>
            <person name="Schaefer M."/>
            <person name="Mueller-Auer S."/>
            <person name="Gabel C."/>
            <person name="Fuchs M."/>
            <person name="Benes V."/>
            <person name="Wurmbach E."/>
            <person name="Drzonek H."/>
            <person name="Erfle H."/>
            <person name="Jordan N."/>
            <person name="Bangert S."/>
            <person name="Wiedelmann R."/>
            <person name="Kranz H."/>
            <person name="Voss H."/>
            <person name="Holland R."/>
            <person name="Brandt P."/>
            <person name="Nyakatura G."/>
            <person name="Vezzi A."/>
            <person name="D'Angelo M."/>
            <person name="Pallavicini A."/>
            <person name="Toppo S."/>
            <person name="Simionati B."/>
            <person name="Conrad A."/>
            <person name="Hornischer K."/>
            <person name="Kauer G."/>
            <person name="Loehnert T.-H."/>
            <person name="Nordsiek G."/>
            <person name="Reichelt J."/>
            <person name="Scharfe M."/>
            <person name="Schoen O."/>
            <person name="Bargues M."/>
            <person name="Terol J."/>
            <person name="Climent J."/>
            <person name="Navarro P."/>
            <person name="Collado C."/>
            <person name="Perez-Perez A."/>
            <person name="Ottenwaelder B."/>
            <person name="Duchemin D."/>
            <person name="Cooke R."/>
            <person name="Laudie M."/>
            <person name="Berger-Llauro C."/>
            <person name="Purnelle B."/>
            <person name="Masuy D."/>
            <person name="de Haan M."/>
            <person name="Maarse A.C."/>
            <person name="Alcaraz J.-P."/>
            <person name="Cottet A."/>
            <person name="Casacuberta E."/>
            <person name="Monfort A."/>
            <person name="Argiriou A."/>
            <person name="Flores M."/>
            <person name="Liguori R."/>
            <person name="Vitale D."/>
            <person name="Mannhaupt G."/>
            <person name="Haase D."/>
            <person name="Schoof H."/>
            <person name="Rudd S."/>
            <person name="Zaccaria P."/>
            <person name="Mewes H.-W."/>
            <person name="Mayer K.F.X."/>
            <person name="Kaul S."/>
            <person name="Town C.D."/>
            <person name="Koo H.L."/>
            <person name="Tallon L.J."/>
            <person name="Jenkins J."/>
            <person name="Rooney T."/>
            <person name="Rizzo M."/>
            <person name="Walts A."/>
            <person name="Utterback T."/>
            <person name="Fujii C.Y."/>
            <person name="Shea T.P."/>
            <person name="Creasy T.H."/>
            <person name="Haas B."/>
            <person name="Maiti R."/>
            <person name="Wu D."/>
            <person name="Peterson J."/>
            <person name="Van Aken S."/>
            <person name="Pai G."/>
            <person name="Militscher J."/>
            <person name="Sellers P."/>
            <person name="Gill J.E."/>
            <person name="Feldblyum T.V."/>
            <person name="Preuss D."/>
            <person name="Lin X."/>
            <person name="Nierman W.C."/>
            <person name="Salzberg S.L."/>
            <person name="White O."/>
            <person name="Venter J.C."/>
            <person name="Fraser C.M."/>
            <person name="Kaneko T."/>
            <person name="Nakamura Y."/>
            <person name="Sato S."/>
            <person name="Kato T."/>
            <person name="Asamizu E."/>
            <person name="Sasamoto S."/>
            <person name="Kimura T."/>
            <person name="Idesawa K."/>
            <person name="Kawashima K."/>
            <person name="Kishida Y."/>
            <person name="Kiyokawa C."/>
            <person name="Kohara M."/>
            <person name="Matsumoto M."/>
            <person name="Matsuno A."/>
            <person name="Muraki A."/>
            <person name="Nakayama S."/>
            <person name="Nakazaki N."/>
            <person name="Shinpo S."/>
            <person name="Takeuchi C."/>
            <person name="Wada T."/>
            <person name="Watanabe A."/>
            <person name="Yamada M."/>
            <person name="Yasuda M."/>
            <person name="Tabata S."/>
        </authorList>
    </citation>
    <scope>NUCLEOTIDE SEQUENCE [LARGE SCALE GENOMIC DNA]</scope>
    <source>
        <strain>cv. Columbia</strain>
    </source>
</reference>
<reference key="4">
    <citation type="journal article" date="2017" name="Plant J.">
        <title>Araport11: a complete reannotation of the Arabidopsis thaliana reference genome.</title>
        <authorList>
            <person name="Cheng C.Y."/>
            <person name="Krishnakumar V."/>
            <person name="Chan A.P."/>
            <person name="Thibaud-Nissen F."/>
            <person name="Schobel S."/>
            <person name="Town C.D."/>
        </authorList>
    </citation>
    <scope>GENOME REANNOTATION</scope>
    <source>
        <strain>cv. Columbia</strain>
    </source>
</reference>
<name>3MG_ARATH</name>
<accession>Q39147</accession>